<accession>P9WLL0</accession>
<accession>L0TA38</accession>
<accession>P64933</accession>
<accession>Q10685</accession>
<gene>
    <name type="ordered locus">MT2137</name>
</gene>
<sequence length="323" mass="33321">MLATLSQIRAWSTEHLIDAAGYWTETADRWEDVFLQMRNQAHAIAWNGAGGDGLRQRTRADFSTVSGIADQLRRAATIARNGAGTIDAAQRRVMYAVEDAQDAGFNVGEDLSVTDTKTTQPAAVQAARLAQAQALAGDIRLRVGQLVAAENEVSGQLAATTGDVGNVRFAGAPVVAHSAVQLVDFFKQDGPTPPPPGAPHPSGGADGPYSDPITSMMLPPAGTEAPVSDATKRWVDNMVNELAARPPDDPIAVEARRLAFQALHRPCNSAEWTAAVAGFAGSSAGVVGTALAIPAGPADWALLGAALLGVGGSGAAVVNCATK</sequence>
<reference key="1">
    <citation type="journal article" date="2002" name="J. Bacteriol.">
        <title>Whole-genome comparison of Mycobacterium tuberculosis clinical and laboratory strains.</title>
        <authorList>
            <person name="Fleischmann R.D."/>
            <person name="Alland D."/>
            <person name="Eisen J.A."/>
            <person name="Carpenter L."/>
            <person name="White O."/>
            <person name="Peterson J.D."/>
            <person name="DeBoy R.T."/>
            <person name="Dodson R.J."/>
            <person name="Gwinn M.L."/>
            <person name="Haft D.H."/>
            <person name="Hickey E.K."/>
            <person name="Kolonay J.F."/>
            <person name="Nelson W.C."/>
            <person name="Umayam L.A."/>
            <person name="Ermolaeva M.D."/>
            <person name="Salzberg S.L."/>
            <person name="Delcher A."/>
            <person name="Utterback T.R."/>
            <person name="Weidman J.F."/>
            <person name="Khouri H.M."/>
            <person name="Gill J."/>
            <person name="Mikula A."/>
            <person name="Bishai W."/>
            <person name="Jacobs W.R. Jr."/>
            <person name="Venter J.C."/>
            <person name="Fraser C.M."/>
        </authorList>
    </citation>
    <scope>NUCLEOTIDE SEQUENCE [LARGE SCALE GENOMIC DNA]</scope>
    <source>
        <strain>CDC 1551 / Oshkosh</strain>
    </source>
</reference>
<dbReference type="EMBL" id="AE000516">
    <property type="protein sequence ID" value="AAK46417.1"/>
    <property type="molecule type" value="Genomic_DNA"/>
</dbReference>
<dbReference type="PIR" id="H70765">
    <property type="entry name" value="H70765"/>
</dbReference>
<dbReference type="RefSeq" id="WP_003899159.1">
    <property type="nucleotide sequence ID" value="NZ_KK341227.1"/>
</dbReference>
<dbReference type="SMR" id="P9WLL0"/>
<dbReference type="KEGG" id="mtc:MT2137"/>
<dbReference type="PATRIC" id="fig|83331.31.peg.2305"/>
<dbReference type="HOGENOM" id="CLU_055107_0_0_11"/>
<dbReference type="Proteomes" id="UP000001020">
    <property type="component" value="Chromosome"/>
</dbReference>
<dbReference type="GO" id="GO:0005886">
    <property type="term" value="C:plasma membrane"/>
    <property type="evidence" value="ECO:0007669"/>
    <property type="project" value="UniProtKB-SubCell"/>
</dbReference>
<keyword id="KW-1003">Cell membrane</keyword>
<keyword id="KW-0472">Membrane</keyword>
<keyword id="KW-1185">Reference proteome</keyword>
<keyword id="KW-0732">Signal</keyword>
<keyword id="KW-0812">Transmembrane</keyword>
<keyword id="KW-1133">Transmembrane helix</keyword>
<protein>
    <recommendedName>
        <fullName>Uncharacterized protein MT2137</fullName>
    </recommendedName>
</protein>
<feature type="signal peptide" evidence="1">
    <location>
        <begin position="1"/>
        <end position="45"/>
    </location>
</feature>
<feature type="chain" id="PRO_0000427460" description="Uncharacterized protein MT2137">
    <location>
        <begin position="46"/>
        <end position="323"/>
    </location>
</feature>
<feature type="transmembrane region" description="Helical" evidence="1">
    <location>
        <begin position="269"/>
        <end position="289"/>
    </location>
</feature>
<feature type="transmembrane region" description="Helical" evidence="1">
    <location>
        <begin position="290"/>
        <end position="310"/>
    </location>
</feature>
<feature type="region of interest" description="Disordered" evidence="2">
    <location>
        <begin position="186"/>
        <end position="227"/>
    </location>
</feature>
<organism>
    <name type="scientific">Mycobacterium tuberculosis (strain CDC 1551 / Oshkosh)</name>
    <dbReference type="NCBI Taxonomy" id="83331"/>
    <lineage>
        <taxon>Bacteria</taxon>
        <taxon>Bacillati</taxon>
        <taxon>Actinomycetota</taxon>
        <taxon>Actinomycetes</taxon>
        <taxon>Mycobacteriales</taxon>
        <taxon>Mycobacteriaceae</taxon>
        <taxon>Mycobacterium</taxon>
        <taxon>Mycobacterium tuberculosis complex</taxon>
    </lineage>
</organism>
<name>Y2077_MYCTO</name>
<comment type="subcellular location">
    <subcellularLocation>
        <location evidence="3">Cell membrane</location>
        <topology evidence="3">Multi-pass membrane protein</topology>
    </subcellularLocation>
</comment>
<evidence type="ECO:0000255" key="1"/>
<evidence type="ECO:0000256" key="2">
    <source>
        <dbReference type="SAM" id="MobiDB-lite"/>
    </source>
</evidence>
<evidence type="ECO:0000305" key="3"/>
<proteinExistence type="inferred from homology"/>